<organism>
    <name type="scientific">Emericella nidulans (strain FGSC A4 / ATCC 38163 / CBS 112.46 / NRRL 194 / M139)</name>
    <name type="common">Aspergillus nidulans</name>
    <dbReference type="NCBI Taxonomy" id="227321"/>
    <lineage>
        <taxon>Eukaryota</taxon>
        <taxon>Fungi</taxon>
        <taxon>Dikarya</taxon>
        <taxon>Ascomycota</taxon>
        <taxon>Pezizomycotina</taxon>
        <taxon>Eurotiomycetes</taxon>
        <taxon>Eurotiomycetidae</taxon>
        <taxon>Eurotiales</taxon>
        <taxon>Aspergillaceae</taxon>
        <taxon>Aspergillus</taxon>
        <taxon>Aspergillus subgen. Nidulantes</taxon>
    </lineage>
</organism>
<evidence type="ECO:0000250" key="1">
    <source>
        <dbReference type="UniProtKB" id="G2Q5N0"/>
    </source>
</evidence>
<evidence type="ECO:0000250" key="2">
    <source>
        <dbReference type="UniProtKB" id="Q04370"/>
    </source>
</evidence>
<evidence type="ECO:0000255" key="3"/>
<evidence type="ECO:0000256" key="4">
    <source>
        <dbReference type="SAM" id="MobiDB-lite"/>
    </source>
</evidence>
<evidence type="ECO:0000305" key="5"/>
<comment type="function">
    <text evidence="2">Component of a retrotranslocation channel required for peroxisome organization by mediating export of the PEX5 receptor from peroxisomes to the cytosol, thereby promoting PEX5 recycling. The retrotranslocation channel is composed of PEX2, PEX10 and PEX12; each subunit contributing transmembrane segments that coassemble into an open channel that specifically allows the passage of PEX5 through the peroxisomal membrane. PEX12 also regulates PEX5 recycling by activating the E3 ubiquitin-protein ligase activity of PEX10. When PEX5 recycling is compromised, PEX12 stimulates PEX10-mediated polyubiquitination of PEX5, leading to its subsequent degradation.</text>
</comment>
<comment type="pathway">
    <text evidence="2">Protein modification; protein ubiquitination.</text>
</comment>
<comment type="subunit">
    <text evidence="2">Component of the PEX2-PEX10-PEX12 retrotranslocation channel, composed of PEX2, PEX10 and PEX12.</text>
</comment>
<comment type="subcellular location">
    <subcellularLocation>
        <location evidence="2">Peroxisome membrane</location>
        <topology evidence="3">Multi-pass membrane protein</topology>
    </subcellularLocation>
</comment>
<comment type="domain">
    <text evidence="1">The three subunits of the retrotranslocation channel (PEX2, PEX10 and PEX12) coassemble in the membrane into a channel with an open 10 Angstrom pore. The RING-type zinc-fingers that catalyze PEX5 receptor ubiquitination are positioned above the pore on the cytosolic side of the complex.</text>
</comment>
<comment type="domain">
    <text evidence="2">The RING-type zinc-finger is degenerated and only coordinates one zinc ions, preventing E3 ubiquitin-protein ligase activity.</text>
</comment>
<comment type="similarity">
    <text evidence="5">Belongs to the pex2/pex10/pex12 family.</text>
</comment>
<comment type="sequence caution" evidence="5">
    <conflict type="erroneous gene model prediction">
        <sequence resource="EMBL-CDS" id="EAA61357"/>
    </conflict>
    <text>AN7306 was demerged into AN10923 and AN10925.</text>
</comment>
<dbReference type="EMBL" id="BN001304">
    <property type="protein sequence ID" value="CBF78652.1"/>
    <property type="molecule type" value="Genomic_DNA"/>
</dbReference>
<dbReference type="EMBL" id="AACD01000127">
    <property type="protein sequence ID" value="EAA61357.1"/>
    <property type="status" value="ALT_SEQ"/>
    <property type="molecule type" value="Genomic_DNA"/>
</dbReference>
<dbReference type="RefSeq" id="XP_680575.1">
    <property type="nucleotide sequence ID" value="XM_675483.1"/>
</dbReference>
<dbReference type="SMR" id="C8VCP8"/>
<dbReference type="FunCoup" id="C8VCP8">
    <property type="interactions" value="529"/>
</dbReference>
<dbReference type="STRING" id="227321.C8VCP8"/>
<dbReference type="EnsemblFungi" id="CBF78652">
    <property type="protein sequence ID" value="CBF78652"/>
    <property type="gene ID" value="ANIA_10925"/>
</dbReference>
<dbReference type="KEGG" id="ani:ANIA_10925"/>
<dbReference type="VEuPathDB" id="FungiDB:AN10925"/>
<dbReference type="eggNOG" id="KOG0826">
    <property type="taxonomic scope" value="Eukaryota"/>
</dbReference>
<dbReference type="HOGENOM" id="CLU_272850_0_0_1"/>
<dbReference type="InParanoid" id="C8VCP8"/>
<dbReference type="OMA" id="QHYLARC"/>
<dbReference type="OrthoDB" id="107372at2759"/>
<dbReference type="UniPathway" id="UPA00143"/>
<dbReference type="Proteomes" id="UP000000560">
    <property type="component" value="Chromosome IV"/>
</dbReference>
<dbReference type="GO" id="GO:1990429">
    <property type="term" value="C:peroxisomal importomer complex"/>
    <property type="evidence" value="ECO:0000318"/>
    <property type="project" value="GO_Central"/>
</dbReference>
<dbReference type="GO" id="GO:0005778">
    <property type="term" value="C:peroxisomal membrane"/>
    <property type="evidence" value="ECO:0000266"/>
    <property type="project" value="AspGD"/>
</dbReference>
<dbReference type="GO" id="GO:0004842">
    <property type="term" value="F:ubiquitin-protein transferase activity"/>
    <property type="evidence" value="ECO:0000266"/>
    <property type="project" value="AspGD"/>
</dbReference>
<dbReference type="GO" id="GO:0008270">
    <property type="term" value="F:zinc ion binding"/>
    <property type="evidence" value="ECO:0007669"/>
    <property type="project" value="UniProtKB-KW"/>
</dbReference>
<dbReference type="GO" id="GO:0016558">
    <property type="term" value="P:protein import into peroxisome matrix"/>
    <property type="evidence" value="ECO:0000266"/>
    <property type="project" value="AspGD"/>
</dbReference>
<dbReference type="GO" id="GO:0016562">
    <property type="term" value="P:protein import into peroxisome matrix, receptor recycling"/>
    <property type="evidence" value="ECO:0007669"/>
    <property type="project" value="UniProtKB-ARBA"/>
</dbReference>
<dbReference type="GO" id="GO:0006513">
    <property type="term" value="P:protein monoubiquitination"/>
    <property type="evidence" value="ECO:0000318"/>
    <property type="project" value="GO_Central"/>
</dbReference>
<dbReference type="Gene3D" id="3.30.40.10">
    <property type="entry name" value="Zinc/RING finger domain, C3HC4 (zinc finger)"/>
    <property type="match status" value="1"/>
</dbReference>
<dbReference type="InterPro" id="IPR017375">
    <property type="entry name" value="PEX12"/>
</dbReference>
<dbReference type="InterPro" id="IPR006845">
    <property type="entry name" value="Pex_N"/>
</dbReference>
<dbReference type="InterPro" id="IPR001841">
    <property type="entry name" value="Znf_RING"/>
</dbReference>
<dbReference type="InterPro" id="IPR013083">
    <property type="entry name" value="Znf_RING/FYVE/PHD"/>
</dbReference>
<dbReference type="PANTHER" id="PTHR12888:SF0">
    <property type="entry name" value="PEROXISOME ASSEMBLY PROTEIN 12"/>
    <property type="match status" value="1"/>
</dbReference>
<dbReference type="PANTHER" id="PTHR12888">
    <property type="entry name" value="PEROXISOME ASSEMBLY PROTEIN 12 PEROXIN-12"/>
    <property type="match status" value="1"/>
</dbReference>
<dbReference type="Pfam" id="PF04757">
    <property type="entry name" value="Pex2_Pex12"/>
    <property type="match status" value="1"/>
</dbReference>
<dbReference type="SMART" id="SM00184">
    <property type="entry name" value="RING"/>
    <property type="match status" value="1"/>
</dbReference>
<dbReference type="SUPFAM" id="SSF57850">
    <property type="entry name" value="RING/U-box"/>
    <property type="match status" value="1"/>
</dbReference>
<keyword id="KW-0472">Membrane</keyword>
<keyword id="KW-0479">Metal-binding</keyword>
<keyword id="KW-0576">Peroxisome</keyword>
<keyword id="KW-0653">Protein transport</keyword>
<keyword id="KW-1185">Reference proteome</keyword>
<keyword id="KW-0812">Transmembrane</keyword>
<keyword id="KW-1133">Transmembrane helix</keyword>
<keyword id="KW-0813">Transport</keyword>
<keyword id="KW-0833">Ubl conjugation pathway</keyword>
<keyword id="KW-0862">Zinc</keyword>
<keyword id="KW-0863">Zinc-finger</keyword>
<protein>
    <recommendedName>
        <fullName evidence="5">Peroxisome assembly protein 12</fullName>
    </recommendedName>
    <alternativeName>
        <fullName evidence="5">Peroxin-12</fullName>
    </alternativeName>
</protein>
<accession>C8VCP8</accession>
<accession>Q5AWM4</accession>
<name>PEX12_EMENI</name>
<feature type="chain" id="PRO_0000404498" description="Peroxisome assembly protein 12">
    <location>
        <begin position="1"/>
        <end position="489"/>
    </location>
</feature>
<feature type="topological domain" description="Peroxisomal matrix" evidence="1">
    <location>
        <begin position="1"/>
        <end position="17"/>
    </location>
</feature>
<feature type="transmembrane region" description="Helical; Name=TM1" evidence="1">
    <location>
        <begin position="18"/>
        <end position="45"/>
    </location>
</feature>
<feature type="topological domain" description="Cytoplasmic" evidence="1">
    <location>
        <begin position="46"/>
        <end position="49"/>
    </location>
</feature>
<feature type="transmembrane region" description="Helical; Name=TM2" evidence="1">
    <location>
        <begin position="50"/>
        <end position="74"/>
    </location>
</feature>
<feature type="topological domain" description="Peroxisomal matrix" evidence="1 5">
    <location>
        <begin position="75"/>
        <end position="118"/>
    </location>
</feature>
<feature type="transmembrane region" description="Helical; Name=TM3" evidence="1">
    <location>
        <begin position="119"/>
        <end position="156"/>
    </location>
</feature>
<feature type="topological domain" description="Cytoplasmic" evidence="1">
    <location>
        <begin position="157"/>
        <end position="172"/>
    </location>
</feature>
<feature type="transmembrane region" description="Helical; Name=TM4" evidence="1">
    <location>
        <begin position="173"/>
        <end position="209"/>
    </location>
</feature>
<feature type="topological domain" description="Peroxisomal matrix" evidence="1">
    <location>
        <begin position="210"/>
        <end position="280"/>
    </location>
</feature>
<feature type="transmembrane region" description="Helical; Name=TM5" evidence="1">
    <location>
        <begin position="281"/>
        <end position="308"/>
    </location>
</feature>
<feature type="topological domain" description="Cytoplasmic" evidence="1">
    <location>
        <begin position="309"/>
        <end position="489"/>
    </location>
</feature>
<feature type="zinc finger region" description="RING-type; degenerate">
    <location>
        <begin position="384"/>
        <end position="444"/>
    </location>
</feature>
<feature type="region of interest" description="Disordered" evidence="4">
    <location>
        <begin position="316"/>
        <end position="359"/>
    </location>
</feature>
<feature type="region of interest" description="Disordered" evidence="4">
    <location>
        <begin position="433"/>
        <end position="469"/>
    </location>
</feature>
<feature type="compositionally biased region" description="Basic and acidic residues" evidence="4">
    <location>
        <begin position="326"/>
        <end position="342"/>
    </location>
</feature>
<feature type="compositionally biased region" description="Acidic residues" evidence="4">
    <location>
        <begin position="433"/>
        <end position="442"/>
    </location>
</feature>
<feature type="binding site" evidence="1">
    <location>
        <position position="384"/>
    </location>
    <ligand>
        <name>Zn(2+)</name>
        <dbReference type="ChEBI" id="CHEBI:29105"/>
    </ligand>
</feature>
<feature type="binding site" evidence="1">
    <location>
        <position position="387"/>
    </location>
    <ligand>
        <name>Zn(2+)</name>
        <dbReference type="ChEBI" id="CHEBI:29105"/>
    </ligand>
</feature>
<feature type="binding site" evidence="1">
    <location>
        <position position="404"/>
    </location>
    <ligand>
        <name>Zn(2+)</name>
        <dbReference type="ChEBI" id="CHEBI:29105"/>
    </ligand>
</feature>
<feature type="binding site" evidence="1">
    <location>
        <position position="407"/>
    </location>
    <ligand>
        <name>Zn(2+)</name>
        <dbReference type="ChEBI" id="CHEBI:29105"/>
    </ligand>
</feature>
<sequence>MEYLPSLQQEFDELKPSLFELLAEQQLSDLLPPSIRYILAVATHRHPRYLLRVLNSFDEVYALLSLVVERYYLRNFGGSFTENFYSLKRERVLLTKNGEIPRAQLGAPGPVRESLKLRNSDVWKNLLVMVGIPYLKRKLDEGYDIHAAPQASLIMNGGPRYNPSDDLPPHPTIRQRFMHAYKWFLRNVYPSFNAAYYFSILAFNLAYLFDNTKYSSPFLWLIGTRIRRLSSADHQAIAKILEGKPQTPNSRSARSRPGSGLLGLFSPHNLYPQLLTSLRYFLPASIFALKFLEWWHASDFSRQLARKATDTLDIPAPITKGMISPSERKSRPPTKQKEDPESPKSALKTSSPHKRIQPPISASSYLPIFTVPLPPADSDAASSCPVCLNQLTNPTACQTGYVYCYVCIFHWLNGEHQRQIDFMNGDGAGAAWEDDSGDGIDADGDRNETESAAKTGKSRHGKWESGKGRCPVTGRRVLGGTEGLRRVLI</sequence>
<reference key="1">
    <citation type="journal article" date="2005" name="Nature">
        <title>Sequencing of Aspergillus nidulans and comparative analysis with A. fumigatus and A. oryzae.</title>
        <authorList>
            <person name="Galagan J.E."/>
            <person name="Calvo S.E."/>
            <person name="Cuomo C."/>
            <person name="Ma L.-J."/>
            <person name="Wortman J.R."/>
            <person name="Batzoglou S."/>
            <person name="Lee S.-I."/>
            <person name="Bastuerkmen M."/>
            <person name="Spevak C.C."/>
            <person name="Clutterbuck J."/>
            <person name="Kapitonov V."/>
            <person name="Jurka J."/>
            <person name="Scazzocchio C."/>
            <person name="Farman M.L."/>
            <person name="Butler J."/>
            <person name="Purcell S."/>
            <person name="Harris S."/>
            <person name="Braus G.H."/>
            <person name="Draht O."/>
            <person name="Busch S."/>
            <person name="D'Enfert C."/>
            <person name="Bouchier C."/>
            <person name="Goldman G.H."/>
            <person name="Bell-Pedersen D."/>
            <person name="Griffiths-Jones S."/>
            <person name="Doonan J.H."/>
            <person name="Yu J."/>
            <person name="Vienken K."/>
            <person name="Pain A."/>
            <person name="Freitag M."/>
            <person name="Selker E.U."/>
            <person name="Archer D.B."/>
            <person name="Penalva M.A."/>
            <person name="Oakley B.R."/>
            <person name="Momany M."/>
            <person name="Tanaka T."/>
            <person name="Kumagai T."/>
            <person name="Asai K."/>
            <person name="Machida M."/>
            <person name="Nierman W.C."/>
            <person name="Denning D.W."/>
            <person name="Caddick M.X."/>
            <person name="Hynes M."/>
            <person name="Paoletti M."/>
            <person name="Fischer R."/>
            <person name="Miller B.L."/>
            <person name="Dyer P.S."/>
            <person name="Sachs M.S."/>
            <person name="Osmani S.A."/>
            <person name="Birren B.W."/>
        </authorList>
    </citation>
    <scope>NUCLEOTIDE SEQUENCE [LARGE SCALE GENOMIC DNA]</scope>
    <source>
        <strain>FGSC A4 / ATCC 38163 / CBS 112.46 / NRRL 194 / M139</strain>
    </source>
</reference>
<reference key="2">
    <citation type="journal article" date="2009" name="Fungal Genet. Biol.">
        <title>The 2008 update of the Aspergillus nidulans genome annotation: a community effort.</title>
        <authorList>
            <person name="Wortman J.R."/>
            <person name="Gilsenan J.M."/>
            <person name="Joardar V."/>
            <person name="Deegan J."/>
            <person name="Clutterbuck J."/>
            <person name="Andersen M.R."/>
            <person name="Archer D."/>
            <person name="Bencina M."/>
            <person name="Braus G."/>
            <person name="Coutinho P."/>
            <person name="von Dohren H."/>
            <person name="Doonan J."/>
            <person name="Driessen A.J."/>
            <person name="Durek P."/>
            <person name="Espeso E."/>
            <person name="Fekete E."/>
            <person name="Flipphi M."/>
            <person name="Estrada C.G."/>
            <person name="Geysens S."/>
            <person name="Goldman G."/>
            <person name="de Groot P.W."/>
            <person name="Hansen K."/>
            <person name="Harris S.D."/>
            <person name="Heinekamp T."/>
            <person name="Helmstaedt K."/>
            <person name="Henrissat B."/>
            <person name="Hofmann G."/>
            <person name="Homan T."/>
            <person name="Horio T."/>
            <person name="Horiuchi H."/>
            <person name="James S."/>
            <person name="Jones M."/>
            <person name="Karaffa L."/>
            <person name="Karanyi Z."/>
            <person name="Kato M."/>
            <person name="Keller N."/>
            <person name="Kelly D.E."/>
            <person name="Kiel J.A."/>
            <person name="Kim J.M."/>
            <person name="van der Klei I.J."/>
            <person name="Klis F.M."/>
            <person name="Kovalchuk A."/>
            <person name="Krasevec N."/>
            <person name="Kubicek C.P."/>
            <person name="Liu B."/>
            <person name="Maccabe A."/>
            <person name="Meyer V."/>
            <person name="Mirabito P."/>
            <person name="Miskei M."/>
            <person name="Mos M."/>
            <person name="Mullins J."/>
            <person name="Nelson D.R."/>
            <person name="Nielsen J."/>
            <person name="Oakley B.R."/>
            <person name="Osmani S.A."/>
            <person name="Pakula T."/>
            <person name="Paszewski A."/>
            <person name="Paulsen I."/>
            <person name="Pilsyk S."/>
            <person name="Pocsi I."/>
            <person name="Punt P.J."/>
            <person name="Ram A.F."/>
            <person name="Ren Q."/>
            <person name="Robellet X."/>
            <person name="Robson G."/>
            <person name="Seiboth B."/>
            <person name="van Solingen P."/>
            <person name="Specht T."/>
            <person name="Sun J."/>
            <person name="Taheri-Talesh N."/>
            <person name="Takeshita N."/>
            <person name="Ussery D."/>
            <person name="vanKuyk P.A."/>
            <person name="Visser H."/>
            <person name="van de Vondervoort P.J."/>
            <person name="de Vries R.P."/>
            <person name="Walton J."/>
            <person name="Xiang X."/>
            <person name="Xiong Y."/>
            <person name="Zeng A.P."/>
            <person name="Brandt B.W."/>
            <person name="Cornell M.J."/>
            <person name="van den Hondel C.A."/>
            <person name="Visser J."/>
            <person name="Oliver S.G."/>
            <person name="Turner G."/>
        </authorList>
    </citation>
    <scope>GENOME REANNOTATION</scope>
    <source>
        <strain>FGSC A4 / ATCC 38163 / CBS 112.46 / NRRL 194 / M139</strain>
    </source>
</reference>
<gene>
    <name type="primary">PEX12</name>
    <name type="ORF">AN10925</name>
</gene>
<proteinExistence type="inferred from homology"/>